<dbReference type="EC" id="2.7.7.64"/>
<dbReference type="EMBL" id="AP003726">
    <property type="protein sequence ID" value="BAD53770.1"/>
    <property type="molecule type" value="Genomic_DNA"/>
</dbReference>
<dbReference type="EMBL" id="AP008212">
    <property type="protein sequence ID" value="BAF20396.1"/>
    <property type="molecule type" value="Genomic_DNA"/>
</dbReference>
<dbReference type="EMBL" id="AP014962">
    <property type="protein sequence ID" value="BAS99346.1"/>
    <property type="molecule type" value="Genomic_DNA"/>
</dbReference>
<dbReference type="EMBL" id="CM000143">
    <property type="status" value="NOT_ANNOTATED_CDS"/>
    <property type="molecule type" value="Genomic_DNA"/>
</dbReference>
<dbReference type="EMBL" id="AK064009">
    <property type="protein sequence ID" value="BAG88961.1"/>
    <property type="molecule type" value="mRNA"/>
</dbReference>
<dbReference type="RefSeq" id="XP_015644365.1">
    <property type="nucleotide sequence ID" value="XM_015788879.1"/>
</dbReference>
<dbReference type="SMR" id="Q5Z8Y4"/>
<dbReference type="FunCoup" id="Q5Z8Y4">
    <property type="interactions" value="1241"/>
</dbReference>
<dbReference type="STRING" id="39947.Q5Z8Y4"/>
<dbReference type="PaxDb" id="39947-Q5Z8Y4"/>
<dbReference type="EnsemblPlants" id="Os06t0701200-01">
    <property type="protein sequence ID" value="Os06t0701200-01"/>
    <property type="gene ID" value="Os06g0701200"/>
</dbReference>
<dbReference type="Gramene" id="Os06t0701200-01">
    <property type="protein sequence ID" value="Os06t0701200-01"/>
    <property type="gene ID" value="Os06g0701200"/>
</dbReference>
<dbReference type="KEGG" id="dosa:Os06g0701200"/>
<dbReference type="eggNOG" id="KOG2388">
    <property type="taxonomic scope" value="Eukaryota"/>
</dbReference>
<dbReference type="HOGENOM" id="CLU_016797_0_0_1"/>
<dbReference type="InParanoid" id="Q5Z8Y4"/>
<dbReference type="OMA" id="PMGPRVV"/>
<dbReference type="OrthoDB" id="532420at2759"/>
<dbReference type="PlantReactome" id="R-OSA-1119431">
    <property type="pathway name" value="UDP-D-glucuronate biosynthesis (from myo-inositol)"/>
</dbReference>
<dbReference type="PlantReactome" id="R-OSA-1119574">
    <property type="pathway name" value="UDP-L-arabinose biosynthesis and transport"/>
</dbReference>
<dbReference type="Proteomes" id="UP000000763">
    <property type="component" value="Chromosome 6"/>
</dbReference>
<dbReference type="Proteomes" id="UP000007752">
    <property type="component" value="Chromosome 6"/>
</dbReference>
<dbReference type="Proteomes" id="UP000059680">
    <property type="component" value="Chromosome 6"/>
</dbReference>
<dbReference type="GO" id="GO:0005829">
    <property type="term" value="C:cytosol"/>
    <property type="evidence" value="ECO:0007669"/>
    <property type="project" value="EnsemblPlants"/>
</dbReference>
<dbReference type="GO" id="GO:0090406">
    <property type="term" value="C:pollen tube"/>
    <property type="evidence" value="ECO:0007669"/>
    <property type="project" value="EnsemblPlants"/>
</dbReference>
<dbReference type="GO" id="GO:0047350">
    <property type="term" value="F:glucuronate-1-phosphate uridylyltransferase activity"/>
    <property type="evidence" value="ECO:0007669"/>
    <property type="project" value="EnsemblPlants"/>
</dbReference>
<dbReference type="GO" id="GO:0003977">
    <property type="term" value="F:UDP-N-acetylglucosamine diphosphorylase activity"/>
    <property type="evidence" value="ECO:0000318"/>
    <property type="project" value="GO_Central"/>
</dbReference>
<dbReference type="GO" id="GO:0010491">
    <property type="term" value="F:UTP:arabinose-1-phosphate uridylyltransferase activity"/>
    <property type="evidence" value="ECO:0007669"/>
    <property type="project" value="EnsemblPlants"/>
</dbReference>
<dbReference type="GO" id="GO:0017103">
    <property type="term" value="F:UTP:galactose-1-phosphate uridylyltransferase activity"/>
    <property type="evidence" value="ECO:0007669"/>
    <property type="project" value="EnsemblPlants"/>
</dbReference>
<dbReference type="GO" id="GO:0003983">
    <property type="term" value="F:UTP:glucose-1-phosphate uridylyltransferase activity"/>
    <property type="evidence" value="ECO:0007669"/>
    <property type="project" value="EnsemblPlants"/>
</dbReference>
<dbReference type="GO" id="GO:0047338">
    <property type="term" value="F:UTP:xylose-1-phosphate uridylyltransferase activity"/>
    <property type="evidence" value="ECO:0007669"/>
    <property type="project" value="EnsemblPlants"/>
</dbReference>
<dbReference type="GO" id="GO:0009555">
    <property type="term" value="P:pollen development"/>
    <property type="evidence" value="ECO:0007669"/>
    <property type="project" value="EnsemblPlants"/>
</dbReference>
<dbReference type="GO" id="GO:0006011">
    <property type="term" value="P:UDP-alpha-D-glucose metabolic process"/>
    <property type="evidence" value="ECO:0007669"/>
    <property type="project" value="EnsemblPlants"/>
</dbReference>
<dbReference type="GO" id="GO:0052573">
    <property type="term" value="P:UDP-D-galactose metabolic process"/>
    <property type="evidence" value="ECO:0007669"/>
    <property type="project" value="EnsemblPlants"/>
</dbReference>
<dbReference type="GO" id="GO:0046398">
    <property type="term" value="P:UDP-glucuronate metabolic process"/>
    <property type="evidence" value="ECO:0007669"/>
    <property type="project" value="EnsemblPlants"/>
</dbReference>
<dbReference type="GO" id="GO:0033356">
    <property type="term" value="P:UDP-L-arabinose metabolic process"/>
    <property type="evidence" value="ECO:0007669"/>
    <property type="project" value="EnsemblPlants"/>
</dbReference>
<dbReference type="GO" id="GO:0006048">
    <property type="term" value="P:UDP-N-acetylglucosamine biosynthetic process"/>
    <property type="evidence" value="ECO:0000318"/>
    <property type="project" value="GO_Central"/>
</dbReference>
<dbReference type="CDD" id="cd06424">
    <property type="entry name" value="UGGPase"/>
    <property type="match status" value="1"/>
</dbReference>
<dbReference type="FunFam" id="2.160.10.30:FF:000001">
    <property type="entry name" value="UDP-sugar pyrophosphorylase"/>
    <property type="match status" value="1"/>
</dbReference>
<dbReference type="FunFam" id="3.90.550.10:FF:000091">
    <property type="entry name" value="UDP-sugar pyrophosphorylase"/>
    <property type="match status" value="1"/>
</dbReference>
<dbReference type="Gene3D" id="2.160.10.30">
    <property type="match status" value="1"/>
</dbReference>
<dbReference type="Gene3D" id="3.90.550.10">
    <property type="entry name" value="Spore Coat Polysaccharide Biosynthesis Protein SpsA, Chain A"/>
    <property type="match status" value="1"/>
</dbReference>
<dbReference type="InterPro" id="IPR029044">
    <property type="entry name" value="Nucleotide-diphossugar_trans"/>
</dbReference>
<dbReference type="InterPro" id="IPR039741">
    <property type="entry name" value="UDP-sugar_pyrophosphorylase"/>
</dbReference>
<dbReference type="InterPro" id="IPR002618">
    <property type="entry name" value="UDPGP_fam"/>
</dbReference>
<dbReference type="PANTHER" id="PTHR11952">
    <property type="entry name" value="UDP- GLUCOSE PYROPHOSPHORYLASE"/>
    <property type="match status" value="1"/>
</dbReference>
<dbReference type="PANTHER" id="PTHR11952:SF9">
    <property type="entry name" value="UDP-SUGAR PYROPHOSPHORYLASE"/>
    <property type="match status" value="1"/>
</dbReference>
<dbReference type="Pfam" id="PF01704">
    <property type="entry name" value="UDPGP"/>
    <property type="match status" value="1"/>
</dbReference>
<dbReference type="SUPFAM" id="SSF53448">
    <property type="entry name" value="Nucleotide-diphospho-sugar transferases"/>
    <property type="match status" value="1"/>
</dbReference>
<keyword id="KW-0548">Nucleotidyltransferase</keyword>
<keyword id="KW-1185">Reference proteome</keyword>
<keyword id="KW-0808">Transferase</keyword>
<comment type="function">
    <text evidence="1">May function as the terminal enzyme of the myo-inositol oxidation (MIO) pathway. May also play a role in the salvage pathway for synthesis of nucleotide sugars (By similarity).</text>
</comment>
<comment type="catalytic activity">
    <reaction>
        <text>a monosaccharide 1-phosphate + UTP + H(+) = a UDP-monosaccharide + diphosphate</text>
        <dbReference type="Rhea" id="RHEA:13205"/>
        <dbReference type="ChEBI" id="CHEBI:15378"/>
        <dbReference type="ChEBI" id="CHEBI:33019"/>
        <dbReference type="ChEBI" id="CHEBI:46398"/>
        <dbReference type="ChEBI" id="CHEBI:140358"/>
        <dbReference type="ChEBI" id="CHEBI:140359"/>
        <dbReference type="EC" id="2.7.7.64"/>
    </reaction>
</comment>
<comment type="cofactor">
    <cofactor evidence="1">
        <name>Mg(2+)</name>
        <dbReference type="ChEBI" id="CHEBI:18420"/>
    </cofactor>
    <cofactor evidence="1">
        <name>Mn(2+)</name>
        <dbReference type="ChEBI" id="CHEBI:29035"/>
    </cofactor>
</comment>
<comment type="similarity">
    <text evidence="2">Belongs to the USP family.</text>
</comment>
<proteinExistence type="evidence at transcript level"/>
<evidence type="ECO:0000250" key="1"/>
<evidence type="ECO:0000305" key="2"/>
<accession>Q5Z8Y4</accession>
<accession>A3BF42</accession>
<accession>B7E9B4</accession>
<feature type="chain" id="PRO_0000289982" description="UDP-sugar pyrophosphorylase">
    <location>
        <begin position="1"/>
        <end position="616"/>
    </location>
</feature>
<gene>
    <name type="primary">USP</name>
    <name type="ordered locus">Os06g0701200</name>
    <name type="ordered locus">LOC_Os06g48760</name>
    <name type="ORF">OsJ_021664</name>
    <name type="ORF">P0596H10.4</name>
</gene>
<organism>
    <name type="scientific">Oryza sativa subsp. japonica</name>
    <name type="common">Rice</name>
    <dbReference type="NCBI Taxonomy" id="39947"/>
    <lineage>
        <taxon>Eukaryota</taxon>
        <taxon>Viridiplantae</taxon>
        <taxon>Streptophyta</taxon>
        <taxon>Embryophyta</taxon>
        <taxon>Tracheophyta</taxon>
        <taxon>Spermatophyta</taxon>
        <taxon>Magnoliopsida</taxon>
        <taxon>Liliopsida</taxon>
        <taxon>Poales</taxon>
        <taxon>Poaceae</taxon>
        <taxon>BOP clade</taxon>
        <taxon>Oryzoideae</taxon>
        <taxon>Oryzeae</taxon>
        <taxon>Oryzinae</taxon>
        <taxon>Oryza</taxon>
        <taxon>Oryza sativa</taxon>
    </lineage>
</organism>
<reference key="1">
    <citation type="journal article" date="2005" name="Nature">
        <title>The map-based sequence of the rice genome.</title>
        <authorList>
            <consortium name="International rice genome sequencing project (IRGSP)"/>
        </authorList>
    </citation>
    <scope>NUCLEOTIDE SEQUENCE [LARGE SCALE GENOMIC DNA]</scope>
    <source>
        <strain>cv. Nipponbare</strain>
    </source>
</reference>
<reference key="2">
    <citation type="journal article" date="2008" name="Nucleic Acids Res.">
        <title>The rice annotation project database (RAP-DB): 2008 update.</title>
        <authorList>
            <consortium name="The rice annotation project (RAP)"/>
        </authorList>
    </citation>
    <scope>GENOME REANNOTATION</scope>
    <source>
        <strain>cv. Nipponbare</strain>
    </source>
</reference>
<reference key="3">
    <citation type="journal article" date="2013" name="Rice">
        <title>Improvement of the Oryza sativa Nipponbare reference genome using next generation sequence and optical map data.</title>
        <authorList>
            <person name="Kawahara Y."/>
            <person name="de la Bastide M."/>
            <person name="Hamilton J.P."/>
            <person name="Kanamori H."/>
            <person name="McCombie W.R."/>
            <person name="Ouyang S."/>
            <person name="Schwartz D.C."/>
            <person name="Tanaka T."/>
            <person name="Wu J."/>
            <person name="Zhou S."/>
            <person name="Childs K.L."/>
            <person name="Davidson R.M."/>
            <person name="Lin H."/>
            <person name="Quesada-Ocampo L."/>
            <person name="Vaillancourt B."/>
            <person name="Sakai H."/>
            <person name="Lee S.S."/>
            <person name="Kim J."/>
            <person name="Numa H."/>
            <person name="Itoh T."/>
            <person name="Buell C.R."/>
            <person name="Matsumoto T."/>
        </authorList>
    </citation>
    <scope>GENOME REANNOTATION</scope>
    <source>
        <strain>cv. Nipponbare</strain>
    </source>
</reference>
<reference key="4">
    <citation type="journal article" date="2005" name="PLoS Biol.">
        <title>The genomes of Oryza sativa: a history of duplications.</title>
        <authorList>
            <person name="Yu J."/>
            <person name="Wang J."/>
            <person name="Lin W."/>
            <person name="Li S."/>
            <person name="Li H."/>
            <person name="Zhou J."/>
            <person name="Ni P."/>
            <person name="Dong W."/>
            <person name="Hu S."/>
            <person name="Zeng C."/>
            <person name="Zhang J."/>
            <person name="Zhang Y."/>
            <person name="Li R."/>
            <person name="Xu Z."/>
            <person name="Li S."/>
            <person name="Li X."/>
            <person name="Zheng H."/>
            <person name="Cong L."/>
            <person name="Lin L."/>
            <person name="Yin J."/>
            <person name="Geng J."/>
            <person name="Li G."/>
            <person name="Shi J."/>
            <person name="Liu J."/>
            <person name="Lv H."/>
            <person name="Li J."/>
            <person name="Wang J."/>
            <person name="Deng Y."/>
            <person name="Ran L."/>
            <person name="Shi X."/>
            <person name="Wang X."/>
            <person name="Wu Q."/>
            <person name="Li C."/>
            <person name="Ren X."/>
            <person name="Wang J."/>
            <person name="Wang X."/>
            <person name="Li D."/>
            <person name="Liu D."/>
            <person name="Zhang X."/>
            <person name="Ji Z."/>
            <person name="Zhao W."/>
            <person name="Sun Y."/>
            <person name="Zhang Z."/>
            <person name="Bao J."/>
            <person name="Han Y."/>
            <person name="Dong L."/>
            <person name="Ji J."/>
            <person name="Chen P."/>
            <person name="Wu S."/>
            <person name="Liu J."/>
            <person name="Xiao Y."/>
            <person name="Bu D."/>
            <person name="Tan J."/>
            <person name="Yang L."/>
            <person name="Ye C."/>
            <person name="Zhang J."/>
            <person name="Xu J."/>
            <person name="Zhou Y."/>
            <person name="Yu Y."/>
            <person name="Zhang B."/>
            <person name="Zhuang S."/>
            <person name="Wei H."/>
            <person name="Liu B."/>
            <person name="Lei M."/>
            <person name="Yu H."/>
            <person name="Li Y."/>
            <person name="Xu H."/>
            <person name="Wei S."/>
            <person name="He X."/>
            <person name="Fang L."/>
            <person name="Zhang Z."/>
            <person name="Zhang Y."/>
            <person name="Huang X."/>
            <person name="Su Z."/>
            <person name="Tong W."/>
            <person name="Li J."/>
            <person name="Tong Z."/>
            <person name="Li S."/>
            <person name="Ye J."/>
            <person name="Wang L."/>
            <person name="Fang L."/>
            <person name="Lei T."/>
            <person name="Chen C.-S."/>
            <person name="Chen H.-C."/>
            <person name="Xu Z."/>
            <person name="Li H."/>
            <person name="Huang H."/>
            <person name="Zhang F."/>
            <person name="Xu H."/>
            <person name="Li N."/>
            <person name="Zhao C."/>
            <person name="Li S."/>
            <person name="Dong L."/>
            <person name="Huang Y."/>
            <person name="Li L."/>
            <person name="Xi Y."/>
            <person name="Qi Q."/>
            <person name="Li W."/>
            <person name="Zhang B."/>
            <person name="Hu W."/>
            <person name="Zhang Y."/>
            <person name="Tian X."/>
            <person name="Jiao Y."/>
            <person name="Liang X."/>
            <person name="Jin J."/>
            <person name="Gao L."/>
            <person name="Zheng W."/>
            <person name="Hao B."/>
            <person name="Liu S.-M."/>
            <person name="Wang W."/>
            <person name="Yuan L."/>
            <person name="Cao M."/>
            <person name="McDermott J."/>
            <person name="Samudrala R."/>
            <person name="Wang J."/>
            <person name="Wong G.K.-S."/>
            <person name="Yang H."/>
        </authorList>
    </citation>
    <scope>NUCLEOTIDE SEQUENCE [LARGE SCALE GENOMIC DNA]</scope>
    <source>
        <strain>cv. Nipponbare</strain>
    </source>
</reference>
<reference key="5">
    <citation type="journal article" date="2003" name="Science">
        <title>Collection, mapping, and annotation of over 28,000 cDNA clones from japonica rice.</title>
        <authorList>
            <consortium name="The rice full-length cDNA consortium"/>
        </authorList>
    </citation>
    <scope>NUCLEOTIDE SEQUENCE [LARGE SCALE MRNA]</scope>
    <source>
        <strain>cv. Nipponbare</strain>
    </source>
</reference>
<protein>
    <recommendedName>
        <fullName>UDP-sugar pyrophosphorylase</fullName>
        <ecNumber>2.7.7.64</ecNumber>
    </recommendedName>
</protein>
<name>USP_ORYSJ</name>
<sequence>MASDGDGAAAVAALGISGGGGDDWAPPLRRNLPLLAPHEVKLAKLLLSEGQSHLFEHWPEPGVDDDKKRNFFDQVCRLNSSYPGGLASYIQNARKLLADSKAGKNPYDGFSPSVPSGEVLTFGDDNFVSLEEAGVKEARHAAFVLVAGGLGERLGYKGIKVALPRETTTGKCFLQHYIESILALQEASCKLVEGECNTKIPFVIMTSDDTNALTVKLLESNSYFGMEPSQVHILKQEKVACLADNDARLALDPNDKYKIQTKPHGHGDVHALLYSSGLLEQWKSTGRKWVLFFQDTNGLLFNAIPSALGVSATKGYNVNSLAVPRKAKEAIGGITKLTHVDGRTMVINVEYNQLDPLLRATGHPDGDANCETGYSPYPGNINQLILEIGPYMEELQKTHGAISEFVNPKYTDSTKTAFKSSTRLECMMQDYPKTLPPSAKVGFTVMDAWLTYAPVKNNPEDSAKVPKGNPYHSATSGEMAIYRANSLILRKAGAQIADPVIDTFNGQEVEVWPRITWIPRWGLIFKDVKAKVHSNSSVSQRSALVINGKNITIQGLSLDGTLIVNAKDEAKFNVTGHIENKGWTIQHVDHKDTSEKEEIRIRGFKFNKVEQLELNY</sequence>